<name>ACHG_ELEEL</name>
<gene>
    <name type="primary">chrng</name>
</gene>
<feature type="chain" id="PRO_0000076979" description="Acetylcholine receptor subunit gamma">
    <location>
        <begin position="1"/>
        <end position="23" status="greater than"/>
    </location>
</feature>
<feature type="non-terminal residue">
    <location>
        <position position="23"/>
    </location>
</feature>
<protein>
    <recommendedName>
        <fullName>Acetylcholine receptor subunit gamma</fullName>
    </recommendedName>
</protein>
<comment type="function">
    <text>After binding acetylcholine, the AChR responds by an extensive change in conformation that affects all subunits and leads to opening of an ion-conducting channel across the plasma membrane.</text>
</comment>
<comment type="catalytic activity">
    <reaction evidence="1">
        <text>K(+)(in) = K(+)(out)</text>
        <dbReference type="Rhea" id="RHEA:29463"/>
        <dbReference type="ChEBI" id="CHEBI:29103"/>
    </reaction>
</comment>
<comment type="catalytic activity">
    <reaction evidence="1">
        <text>Na(+)(in) = Na(+)(out)</text>
        <dbReference type="Rhea" id="RHEA:34963"/>
        <dbReference type="ChEBI" id="CHEBI:29101"/>
    </reaction>
</comment>
<comment type="subunit">
    <text>Pentamer of two alpha chains, and one each of the beta, delta, and gamma chains.</text>
</comment>
<comment type="subcellular location">
    <subcellularLocation>
        <location>Postsynaptic cell membrane</location>
        <topology>Multi-pass membrane protein</topology>
    </subcellularLocation>
    <subcellularLocation>
        <location>Cell membrane</location>
        <topology>Multi-pass membrane protein</topology>
    </subcellularLocation>
</comment>
<comment type="similarity">
    <text evidence="2">Belongs to the ligand-gated ion channel (TC 1.A.9) family. Acetylcholine receptor (TC 1.A.9.1) subfamily. Gamma/CHRNG sub-subfamily.</text>
</comment>
<keyword id="KW-1003">Cell membrane</keyword>
<keyword id="KW-0903">Direct protein sequencing</keyword>
<keyword id="KW-0407">Ion channel</keyword>
<keyword id="KW-0406">Ion transport</keyword>
<keyword id="KW-1071">Ligand-gated ion channel</keyword>
<keyword id="KW-0472">Membrane</keyword>
<keyword id="KW-0628">Postsynaptic cell membrane</keyword>
<keyword id="KW-0675">Receptor</keyword>
<keyword id="KW-1185">Reference proteome</keyword>
<keyword id="KW-0770">Synapse</keyword>
<keyword id="KW-0812">Transmembrane</keyword>
<keyword id="KW-0813">Transport</keyword>
<sequence length="23" mass="2717">NEESDLIADKFTNYNKLIRPAKH</sequence>
<dbReference type="PIR" id="C27262">
    <property type="entry name" value="C27262"/>
</dbReference>
<dbReference type="STRING" id="8005.ENSEEEP00000025896"/>
<dbReference type="Proteomes" id="UP000314983">
    <property type="component" value="Unassembled WGS sequence"/>
</dbReference>
<dbReference type="GO" id="GO:0045211">
    <property type="term" value="C:postsynaptic membrane"/>
    <property type="evidence" value="ECO:0007669"/>
    <property type="project" value="UniProtKB-SubCell"/>
</dbReference>
<dbReference type="GO" id="GO:1904315">
    <property type="term" value="F:transmitter-gated monoatomic ion channel activity involved in regulation of postsynaptic membrane potential"/>
    <property type="evidence" value="ECO:0000250"/>
    <property type="project" value="UniProtKB"/>
</dbReference>
<organism>
    <name type="scientific">Electrophorus electricus</name>
    <name type="common">Electric eel</name>
    <name type="synonym">Gymnotus electricus</name>
    <dbReference type="NCBI Taxonomy" id="8005"/>
    <lineage>
        <taxon>Eukaryota</taxon>
        <taxon>Metazoa</taxon>
        <taxon>Chordata</taxon>
        <taxon>Craniata</taxon>
        <taxon>Vertebrata</taxon>
        <taxon>Euteleostomi</taxon>
        <taxon>Actinopterygii</taxon>
        <taxon>Neopterygii</taxon>
        <taxon>Teleostei</taxon>
        <taxon>Ostariophysi</taxon>
        <taxon>Gymnotiformes</taxon>
        <taxon>Gymnotoidei</taxon>
        <taxon>Gymnotidae</taxon>
        <taxon>Electrophorus</taxon>
    </lineage>
</organism>
<accession>P09692</accession>
<reference key="1">
    <citation type="journal article" date="1982" name="Proc. Natl. Acad. Sci. U.S.A.">
        <title>Subunit structure of the acetylcholine receptor from Electrophorus electricus.</title>
        <authorList>
            <person name="Conti-Tronconi B.M."/>
            <person name="Hunkapiller M.W."/>
            <person name="Lindstrom J.M."/>
            <person name="Raftery M.A."/>
        </authorList>
    </citation>
    <scope>PROTEIN SEQUENCE</scope>
</reference>
<evidence type="ECO:0000250" key="1">
    <source>
        <dbReference type="UniProtKB" id="P13536"/>
    </source>
</evidence>
<evidence type="ECO:0000305" key="2"/>
<proteinExistence type="evidence at protein level"/>